<reference key="1">
    <citation type="journal article" date="2004" name="Science">
        <title>The 1.2-megabase genome sequence of Mimivirus.</title>
        <authorList>
            <person name="Raoult D."/>
            <person name="Audic S."/>
            <person name="Robert C."/>
            <person name="Abergel C."/>
            <person name="Renesto P."/>
            <person name="Ogata H."/>
            <person name="La Scola B."/>
            <person name="Susan M."/>
            <person name="Claverie J.-M."/>
        </authorList>
    </citation>
    <scope>NUCLEOTIDE SEQUENCE [LARGE SCALE GENOMIC DNA]</scope>
    <source>
        <strain>Rowbotham-Bradford</strain>
    </source>
</reference>
<reference key="2">
    <citation type="journal article" date="2006" name="J. Virol.">
        <title>Mimivirus giant particles incorporate a large fraction of anonymous and unique gene products.</title>
        <authorList>
            <person name="Renesto P."/>
            <person name="Abergel C."/>
            <person name="Decloquement P."/>
            <person name="Moinier D."/>
            <person name="Azza S."/>
            <person name="Ogata H."/>
            <person name="Fourquet P."/>
            <person name="Gorvel J.-P."/>
            <person name="Claverie J.-M."/>
            <person name="Raoult D."/>
        </authorList>
    </citation>
    <scope>IDENTIFICATION BY MASS SPECTROMETRY [LARGE SCALE ANALYSIS]</scope>
    <scope>SUBCELLULAR LOCATION</scope>
</reference>
<keyword id="KW-1185">Reference proteome</keyword>
<keyword id="KW-0946">Virion</keyword>
<organismHost>
    <name type="scientific">Acanthamoeba polyphaga</name>
    <name type="common">Amoeba</name>
    <dbReference type="NCBI Taxonomy" id="5757"/>
</organismHost>
<comment type="subcellular location">
    <subcellularLocation>
        <location evidence="1">Virion</location>
    </subcellularLocation>
</comment>
<comment type="similarity">
    <text evidence="2">Belongs to the GMC oxidoreductase family.</text>
</comment>
<comment type="caution">
    <text evidence="2">The two ORFs L894 and L893 correspond respectively to the N- and C-terminal of a GMC-type oxidoreductase.</text>
</comment>
<dbReference type="EMBL" id="AY653733">
    <property type="protein sequence ID" value="AAV51150.1"/>
    <property type="molecule type" value="Genomic_DNA"/>
</dbReference>
<dbReference type="SMR" id="Q5UQZ2"/>
<dbReference type="Proteomes" id="UP000001134">
    <property type="component" value="Genome"/>
</dbReference>
<dbReference type="GO" id="GO:0044423">
    <property type="term" value="C:virion component"/>
    <property type="evidence" value="ECO:0007669"/>
    <property type="project" value="UniProtKB-KW"/>
</dbReference>
<dbReference type="GO" id="GO:0050660">
    <property type="term" value="F:flavin adenine dinucleotide binding"/>
    <property type="evidence" value="ECO:0007669"/>
    <property type="project" value="InterPro"/>
</dbReference>
<dbReference type="GO" id="GO:0016614">
    <property type="term" value="F:oxidoreductase activity, acting on CH-OH group of donors"/>
    <property type="evidence" value="ECO:0007669"/>
    <property type="project" value="InterPro"/>
</dbReference>
<dbReference type="Gene3D" id="3.50.50.60">
    <property type="entry name" value="FAD/NAD(P)-binding domain"/>
    <property type="match status" value="1"/>
</dbReference>
<dbReference type="InterPro" id="IPR036188">
    <property type="entry name" value="FAD/NAD-bd_sf"/>
</dbReference>
<dbReference type="InterPro" id="IPR012132">
    <property type="entry name" value="GMC_OxRdtase"/>
</dbReference>
<dbReference type="InterPro" id="IPR007867">
    <property type="entry name" value="GMC_OxRtase_C"/>
</dbReference>
<dbReference type="PANTHER" id="PTHR11552:SF147">
    <property type="entry name" value="CHOLINE DEHYDROGENASE, MITOCHONDRIAL"/>
    <property type="match status" value="1"/>
</dbReference>
<dbReference type="PANTHER" id="PTHR11552">
    <property type="entry name" value="GLUCOSE-METHANOL-CHOLINE GMC OXIDOREDUCTASE"/>
    <property type="match status" value="1"/>
</dbReference>
<dbReference type="Pfam" id="PF05199">
    <property type="entry name" value="GMC_oxred_C"/>
    <property type="match status" value="1"/>
</dbReference>
<dbReference type="SUPFAM" id="SSF51905">
    <property type="entry name" value="FAD/NAD(P)-binding domain"/>
    <property type="match status" value="1"/>
</dbReference>
<gene>
    <name type="ordered locus">MIMI_L893</name>
</gene>
<sequence>MKVVAVNAGFNVTLQMAYPPNDLLVELHNGLNTYGINWWHYFVPSLVNDDTPAGKLFASTLSKLSYYPRSGAHLDSHQSCSCSIGGTVDTELKVIGVENVRVTDLSAAPHPPGGNTWCTAAMIGARATDLILGKPLVANLPPEDVPVFTTS</sequence>
<proteinExistence type="evidence at protein level"/>
<feature type="chain" id="PRO_0000243958" description="Putative truncated GMC-type inactive oxidoreductase L893">
    <location>
        <begin position="1"/>
        <end position="151"/>
    </location>
</feature>
<name>YL893_MIMIV</name>
<evidence type="ECO:0000269" key="1">
    <source>
    </source>
</evidence>
<evidence type="ECO:0000305" key="2"/>
<organism>
    <name type="scientific">Acanthamoeba polyphaga mimivirus</name>
    <name type="common">APMV</name>
    <dbReference type="NCBI Taxonomy" id="212035"/>
    <lineage>
        <taxon>Viruses</taxon>
        <taxon>Varidnaviria</taxon>
        <taxon>Bamfordvirae</taxon>
        <taxon>Nucleocytoviricota</taxon>
        <taxon>Megaviricetes</taxon>
        <taxon>Imitervirales</taxon>
        <taxon>Mimiviridae</taxon>
        <taxon>Megamimivirinae</taxon>
        <taxon>Mimivirus</taxon>
        <taxon>Mimivirus bradfordmassiliense</taxon>
    </lineage>
</organism>
<accession>Q5UQZ2</accession>
<protein>
    <recommendedName>
        <fullName>Putative truncated GMC-type inactive oxidoreductase L893</fullName>
    </recommendedName>
</protein>